<sequence>MHKKRVFSGIQPTGQIHLGNYLGAIKHWVEMQDEYENLFCVVNSHAITLPIDPAFLKSQSYELVKLLLACGIDPKQSGLFIQSEVDEHPALAWLLNCQVSMGEMQRMTQFKDKSLKNPKSVNVGLFNYPILMASDILLYQSDLVPVGEDQKQHLELTRNIAEKFNRDFGNCFKVPEPLIAKVGARVMGLDDPKVKMSKSHQGANHAIFLLDEPDIIVKKIKKAATDSMGVIAFDEKREGIFNLLNIYMLLSNESPENIEERFKNKGYGDFKKELAEVMIQALKPIQERYKEISDDEVKAILNGGAEKARPLARATYQKAKELMGLI</sequence>
<organism>
    <name type="scientific">Helicobacter pylori (strain ATCC 700392 / 26695)</name>
    <name type="common">Campylobacter pylori</name>
    <dbReference type="NCBI Taxonomy" id="85962"/>
    <lineage>
        <taxon>Bacteria</taxon>
        <taxon>Pseudomonadati</taxon>
        <taxon>Campylobacterota</taxon>
        <taxon>Epsilonproteobacteria</taxon>
        <taxon>Campylobacterales</taxon>
        <taxon>Helicobacteraceae</taxon>
        <taxon>Helicobacter</taxon>
    </lineage>
</organism>
<gene>
    <name evidence="1" type="primary">trpS</name>
    <name type="ordered locus">HP_1253</name>
</gene>
<reference key="1">
    <citation type="journal article" date="1997" name="Nature">
        <title>The complete genome sequence of the gastric pathogen Helicobacter pylori.</title>
        <authorList>
            <person name="Tomb J.-F."/>
            <person name="White O."/>
            <person name="Kerlavage A.R."/>
            <person name="Clayton R.A."/>
            <person name="Sutton G.G."/>
            <person name="Fleischmann R.D."/>
            <person name="Ketchum K.A."/>
            <person name="Klenk H.-P."/>
            <person name="Gill S.R."/>
            <person name="Dougherty B.A."/>
            <person name="Nelson K.E."/>
            <person name="Quackenbush J."/>
            <person name="Zhou L."/>
            <person name="Kirkness E.F."/>
            <person name="Peterson S.N."/>
            <person name="Loftus B.J."/>
            <person name="Richardson D.L."/>
            <person name="Dodson R.J."/>
            <person name="Khalak H.G."/>
            <person name="Glodek A."/>
            <person name="McKenney K."/>
            <person name="FitzGerald L.M."/>
            <person name="Lee N."/>
            <person name="Adams M.D."/>
            <person name="Hickey E.K."/>
            <person name="Berg D.E."/>
            <person name="Gocayne J.D."/>
            <person name="Utterback T.R."/>
            <person name="Peterson J.D."/>
            <person name="Kelley J.M."/>
            <person name="Cotton M.D."/>
            <person name="Weidman J.F."/>
            <person name="Fujii C."/>
            <person name="Bowman C."/>
            <person name="Watthey L."/>
            <person name="Wallin E."/>
            <person name="Hayes W.S."/>
            <person name="Borodovsky M."/>
            <person name="Karp P.D."/>
            <person name="Smith H.O."/>
            <person name="Fraser C.M."/>
            <person name="Venter J.C."/>
        </authorList>
    </citation>
    <scope>NUCLEOTIDE SEQUENCE [LARGE SCALE GENOMIC DNA]</scope>
    <source>
        <strain>ATCC 700392 / 26695</strain>
    </source>
</reference>
<accession>P56396</accession>
<comment type="function">
    <text evidence="1">Catalyzes the attachment of tryptophan to tRNA(Trp).</text>
</comment>
<comment type="catalytic activity">
    <reaction evidence="1">
        <text>tRNA(Trp) + L-tryptophan + ATP = L-tryptophyl-tRNA(Trp) + AMP + diphosphate + H(+)</text>
        <dbReference type="Rhea" id="RHEA:24080"/>
        <dbReference type="Rhea" id="RHEA-COMP:9671"/>
        <dbReference type="Rhea" id="RHEA-COMP:9705"/>
        <dbReference type="ChEBI" id="CHEBI:15378"/>
        <dbReference type="ChEBI" id="CHEBI:30616"/>
        <dbReference type="ChEBI" id="CHEBI:33019"/>
        <dbReference type="ChEBI" id="CHEBI:57912"/>
        <dbReference type="ChEBI" id="CHEBI:78442"/>
        <dbReference type="ChEBI" id="CHEBI:78535"/>
        <dbReference type="ChEBI" id="CHEBI:456215"/>
        <dbReference type="EC" id="6.1.1.2"/>
    </reaction>
</comment>
<comment type="subunit">
    <text evidence="1">Homodimer.</text>
</comment>
<comment type="subcellular location">
    <subcellularLocation>
        <location evidence="1">Cytoplasm</location>
    </subcellularLocation>
</comment>
<comment type="similarity">
    <text evidence="1">Belongs to the class-I aminoacyl-tRNA synthetase family.</text>
</comment>
<comment type="sequence caution" evidence="2">
    <conflict type="erroneous initiation">
        <sequence resource="EMBL-CDS" id="AAD08297"/>
    </conflict>
</comment>
<feature type="chain" id="PRO_0000136637" description="Tryptophan--tRNA ligase">
    <location>
        <begin position="1"/>
        <end position="326"/>
    </location>
</feature>
<feature type="short sequence motif" description="'HIGH' region" evidence="1">
    <location>
        <begin position="12"/>
        <end position="20"/>
    </location>
</feature>
<feature type="short sequence motif" description="'KMSKS' region" evidence="1">
    <location>
        <begin position="195"/>
        <end position="199"/>
    </location>
</feature>
<feature type="binding site" evidence="1">
    <location>
        <begin position="11"/>
        <end position="13"/>
    </location>
    <ligand>
        <name>ATP</name>
        <dbReference type="ChEBI" id="CHEBI:30616"/>
    </ligand>
</feature>
<feature type="binding site" evidence="1">
    <location>
        <begin position="19"/>
        <end position="20"/>
    </location>
    <ligand>
        <name>ATP</name>
        <dbReference type="ChEBI" id="CHEBI:30616"/>
    </ligand>
</feature>
<feature type="binding site" evidence="1">
    <location>
        <position position="135"/>
    </location>
    <ligand>
        <name>L-tryptophan</name>
        <dbReference type="ChEBI" id="CHEBI:57912"/>
    </ligand>
</feature>
<feature type="binding site" evidence="1">
    <location>
        <begin position="147"/>
        <end position="149"/>
    </location>
    <ligand>
        <name>ATP</name>
        <dbReference type="ChEBI" id="CHEBI:30616"/>
    </ligand>
</feature>
<feature type="binding site" evidence="1">
    <location>
        <position position="186"/>
    </location>
    <ligand>
        <name>ATP</name>
        <dbReference type="ChEBI" id="CHEBI:30616"/>
    </ligand>
</feature>
<feature type="binding site" evidence="1">
    <location>
        <begin position="195"/>
        <end position="199"/>
    </location>
    <ligand>
        <name>ATP</name>
        <dbReference type="ChEBI" id="CHEBI:30616"/>
    </ligand>
</feature>
<dbReference type="EC" id="6.1.1.2" evidence="1"/>
<dbReference type="EMBL" id="AE000511">
    <property type="protein sequence ID" value="AAD08297.1"/>
    <property type="status" value="ALT_INIT"/>
    <property type="molecule type" value="Genomic_DNA"/>
</dbReference>
<dbReference type="PIR" id="E64676">
    <property type="entry name" value="E64676"/>
</dbReference>
<dbReference type="RefSeq" id="NP_208045.1">
    <property type="nucleotide sequence ID" value="NC_000915.1"/>
</dbReference>
<dbReference type="RefSeq" id="WP_001862742.1">
    <property type="nucleotide sequence ID" value="NC_018939.1"/>
</dbReference>
<dbReference type="SMR" id="P56396"/>
<dbReference type="FunCoup" id="P56396">
    <property type="interactions" value="334"/>
</dbReference>
<dbReference type="STRING" id="85962.HP_1253"/>
<dbReference type="PaxDb" id="85962-C694_06475"/>
<dbReference type="EnsemblBacteria" id="AAD08297">
    <property type="protein sequence ID" value="AAD08297"/>
    <property type="gene ID" value="HP_1253"/>
</dbReference>
<dbReference type="KEGG" id="heo:C694_06475"/>
<dbReference type="KEGG" id="hpy:HP_1253"/>
<dbReference type="PATRIC" id="fig|85962.47.peg.1345"/>
<dbReference type="eggNOG" id="COG0180">
    <property type="taxonomic scope" value="Bacteria"/>
</dbReference>
<dbReference type="InParanoid" id="P56396"/>
<dbReference type="OrthoDB" id="9801042at2"/>
<dbReference type="PhylomeDB" id="P56396"/>
<dbReference type="Proteomes" id="UP000000429">
    <property type="component" value="Chromosome"/>
</dbReference>
<dbReference type="GO" id="GO:0005829">
    <property type="term" value="C:cytosol"/>
    <property type="evidence" value="ECO:0000318"/>
    <property type="project" value="GO_Central"/>
</dbReference>
<dbReference type="GO" id="GO:0005524">
    <property type="term" value="F:ATP binding"/>
    <property type="evidence" value="ECO:0007669"/>
    <property type="project" value="UniProtKB-UniRule"/>
</dbReference>
<dbReference type="GO" id="GO:0004830">
    <property type="term" value="F:tryptophan-tRNA ligase activity"/>
    <property type="evidence" value="ECO:0000318"/>
    <property type="project" value="GO_Central"/>
</dbReference>
<dbReference type="GO" id="GO:0006436">
    <property type="term" value="P:tryptophanyl-tRNA aminoacylation"/>
    <property type="evidence" value="ECO:0000318"/>
    <property type="project" value="GO_Central"/>
</dbReference>
<dbReference type="CDD" id="cd00806">
    <property type="entry name" value="TrpRS_core"/>
    <property type="match status" value="1"/>
</dbReference>
<dbReference type="FunFam" id="1.10.240.10:FF:000002">
    <property type="entry name" value="Tryptophan--tRNA ligase"/>
    <property type="match status" value="1"/>
</dbReference>
<dbReference type="Gene3D" id="3.40.50.620">
    <property type="entry name" value="HUPs"/>
    <property type="match status" value="1"/>
</dbReference>
<dbReference type="Gene3D" id="1.10.240.10">
    <property type="entry name" value="Tyrosyl-Transfer RNA Synthetase"/>
    <property type="match status" value="1"/>
</dbReference>
<dbReference type="HAMAP" id="MF_00140_B">
    <property type="entry name" value="Trp_tRNA_synth_B"/>
    <property type="match status" value="1"/>
</dbReference>
<dbReference type="InterPro" id="IPR001412">
    <property type="entry name" value="aa-tRNA-synth_I_CS"/>
</dbReference>
<dbReference type="InterPro" id="IPR002305">
    <property type="entry name" value="aa-tRNA-synth_Ic"/>
</dbReference>
<dbReference type="InterPro" id="IPR014729">
    <property type="entry name" value="Rossmann-like_a/b/a_fold"/>
</dbReference>
<dbReference type="InterPro" id="IPR002306">
    <property type="entry name" value="Trp-tRNA-ligase"/>
</dbReference>
<dbReference type="InterPro" id="IPR024109">
    <property type="entry name" value="Trp-tRNA-ligase_bac-type"/>
</dbReference>
<dbReference type="InterPro" id="IPR050203">
    <property type="entry name" value="Trp-tRNA_synthetase"/>
</dbReference>
<dbReference type="NCBIfam" id="TIGR00233">
    <property type="entry name" value="trpS"/>
    <property type="match status" value="1"/>
</dbReference>
<dbReference type="PANTHER" id="PTHR43766">
    <property type="entry name" value="TRYPTOPHAN--TRNA LIGASE, MITOCHONDRIAL"/>
    <property type="match status" value="1"/>
</dbReference>
<dbReference type="PANTHER" id="PTHR43766:SF1">
    <property type="entry name" value="TRYPTOPHAN--TRNA LIGASE, MITOCHONDRIAL"/>
    <property type="match status" value="1"/>
</dbReference>
<dbReference type="Pfam" id="PF00579">
    <property type="entry name" value="tRNA-synt_1b"/>
    <property type="match status" value="1"/>
</dbReference>
<dbReference type="PRINTS" id="PR01039">
    <property type="entry name" value="TRNASYNTHTRP"/>
</dbReference>
<dbReference type="SUPFAM" id="SSF52374">
    <property type="entry name" value="Nucleotidylyl transferase"/>
    <property type="match status" value="1"/>
</dbReference>
<dbReference type="PROSITE" id="PS00178">
    <property type="entry name" value="AA_TRNA_LIGASE_I"/>
    <property type="match status" value="1"/>
</dbReference>
<proteinExistence type="inferred from homology"/>
<protein>
    <recommendedName>
        <fullName evidence="1">Tryptophan--tRNA ligase</fullName>
        <ecNumber evidence="1">6.1.1.2</ecNumber>
    </recommendedName>
    <alternativeName>
        <fullName evidence="1">Tryptophanyl-tRNA synthetase</fullName>
        <shortName evidence="1">TrpRS</shortName>
    </alternativeName>
</protein>
<keyword id="KW-0030">Aminoacyl-tRNA synthetase</keyword>
<keyword id="KW-0067">ATP-binding</keyword>
<keyword id="KW-0963">Cytoplasm</keyword>
<keyword id="KW-0436">Ligase</keyword>
<keyword id="KW-0547">Nucleotide-binding</keyword>
<keyword id="KW-0648">Protein biosynthesis</keyword>
<keyword id="KW-1185">Reference proteome</keyword>
<name>SYW_HELPY</name>
<evidence type="ECO:0000255" key="1">
    <source>
        <dbReference type="HAMAP-Rule" id="MF_00140"/>
    </source>
</evidence>
<evidence type="ECO:0000305" key="2"/>